<comment type="function">
    <text evidence="2 5">Molecular adapter that acts as a bridge between proteins, and which is involved skeletal muscle development (By similarity). Functions as a signal transducer for MSTN during skeletal muscle regeneration and myogenesis (By similarity). May regulate chemotaxis of both macrophages and myoblasts by reorganising actin cytoskeleton, leading to more efficient lamellipodia formation via a PI3 kinase dependent pathway (By similarity). In contrast to AKIRIN2, not involved in nuclear import of proteasomes (PubMed:34711951).</text>
</comment>
<comment type="interaction">
    <interactant intactId="EBI-10309796">
        <id>Q9H9L7</id>
    </interactant>
    <interactant intactId="EBI-349832">
        <id>Q9HD26</id>
        <label>GOPC</label>
    </interactant>
    <organismsDiffer>false</organismsDiffer>
    <experiments>3</experiments>
</comment>
<comment type="subcellular location">
    <subcellularLocation>
        <location evidence="4">Nucleus</location>
    </subcellularLocation>
</comment>
<comment type="alternative products">
    <event type="alternative splicing"/>
    <isoform>
        <id>Q9H9L7-1</id>
        <name>1</name>
        <sequence type="displayed"/>
    </isoform>
    <isoform>
        <id>Q9H9L7-2</id>
        <name>2</name>
        <sequence type="described" ref="VSP_042769"/>
    </isoform>
</comment>
<comment type="tissue specificity">
    <text evidence="4">Widely expressed with the highest expression in heart, liver, placenta and peripheral blood leukocytes.</text>
</comment>
<comment type="miscellaneous">
    <text evidence="9">'Akiraka ni suru' means 'making things clear' in Japanese. The name is given based on the presence of the clear nuclear localization signal.</text>
</comment>
<comment type="similarity">
    <text evidence="9">Belongs to the akirin family.</text>
</comment>
<comment type="sequence caution" evidence="8">
    <conflict type="erroneous initiation">
        <sequence resource="EMBL-CDS" id="AAI19747"/>
    </conflict>
</comment>
<sequence length="192" mass="21867">MACGATLKRPMEFEAALLSPGSPKRRRCAPLPGPTPGLRPPDAEPPPPFQTQTPPQSLQQPAPPGSERRLPTPEQIFQNIKQEYSRYQRWRHLEVVLNQSEACASESQPHSSALTAPSSPGSSWMKKDQPTFTLRQVGIICERLLKDYEDKIREEYEQILNTKLAEQYESFVKFTHDQIMRRYGTRPTSYVS</sequence>
<reference key="1">
    <citation type="journal article" date="2004" name="Nat. Genet.">
        <title>Complete sequencing and characterization of 21,243 full-length human cDNAs.</title>
        <authorList>
            <person name="Ota T."/>
            <person name="Suzuki Y."/>
            <person name="Nishikawa T."/>
            <person name="Otsuki T."/>
            <person name="Sugiyama T."/>
            <person name="Irie R."/>
            <person name="Wakamatsu A."/>
            <person name="Hayashi K."/>
            <person name="Sato H."/>
            <person name="Nagai K."/>
            <person name="Kimura K."/>
            <person name="Makita H."/>
            <person name="Sekine M."/>
            <person name="Obayashi M."/>
            <person name="Nishi T."/>
            <person name="Shibahara T."/>
            <person name="Tanaka T."/>
            <person name="Ishii S."/>
            <person name="Yamamoto J."/>
            <person name="Saito K."/>
            <person name="Kawai Y."/>
            <person name="Isono Y."/>
            <person name="Nakamura Y."/>
            <person name="Nagahari K."/>
            <person name="Murakami K."/>
            <person name="Yasuda T."/>
            <person name="Iwayanagi T."/>
            <person name="Wagatsuma M."/>
            <person name="Shiratori A."/>
            <person name="Sudo H."/>
            <person name="Hosoiri T."/>
            <person name="Kaku Y."/>
            <person name="Kodaira H."/>
            <person name="Kondo H."/>
            <person name="Sugawara M."/>
            <person name="Takahashi M."/>
            <person name="Kanda K."/>
            <person name="Yokoi T."/>
            <person name="Furuya T."/>
            <person name="Kikkawa E."/>
            <person name="Omura Y."/>
            <person name="Abe K."/>
            <person name="Kamihara K."/>
            <person name="Katsuta N."/>
            <person name="Sato K."/>
            <person name="Tanikawa M."/>
            <person name="Yamazaki M."/>
            <person name="Ninomiya K."/>
            <person name="Ishibashi T."/>
            <person name="Yamashita H."/>
            <person name="Murakawa K."/>
            <person name="Fujimori K."/>
            <person name="Tanai H."/>
            <person name="Kimata M."/>
            <person name="Watanabe M."/>
            <person name="Hiraoka S."/>
            <person name="Chiba Y."/>
            <person name="Ishida S."/>
            <person name="Ono Y."/>
            <person name="Takiguchi S."/>
            <person name="Watanabe S."/>
            <person name="Yosida M."/>
            <person name="Hotuta T."/>
            <person name="Kusano J."/>
            <person name="Kanehori K."/>
            <person name="Takahashi-Fujii A."/>
            <person name="Hara H."/>
            <person name="Tanase T.-O."/>
            <person name="Nomura Y."/>
            <person name="Togiya S."/>
            <person name="Komai F."/>
            <person name="Hara R."/>
            <person name="Takeuchi K."/>
            <person name="Arita M."/>
            <person name="Imose N."/>
            <person name="Musashino K."/>
            <person name="Yuuki H."/>
            <person name="Oshima A."/>
            <person name="Sasaki N."/>
            <person name="Aotsuka S."/>
            <person name="Yoshikawa Y."/>
            <person name="Matsunawa H."/>
            <person name="Ichihara T."/>
            <person name="Shiohata N."/>
            <person name="Sano S."/>
            <person name="Moriya S."/>
            <person name="Momiyama H."/>
            <person name="Satoh N."/>
            <person name="Takami S."/>
            <person name="Terashima Y."/>
            <person name="Suzuki O."/>
            <person name="Nakagawa S."/>
            <person name="Senoh A."/>
            <person name="Mizoguchi H."/>
            <person name="Goto Y."/>
            <person name="Shimizu F."/>
            <person name="Wakebe H."/>
            <person name="Hishigaki H."/>
            <person name="Watanabe T."/>
            <person name="Sugiyama A."/>
            <person name="Takemoto M."/>
            <person name="Kawakami B."/>
            <person name="Yamazaki M."/>
            <person name="Watanabe K."/>
            <person name="Kumagai A."/>
            <person name="Itakura S."/>
            <person name="Fukuzumi Y."/>
            <person name="Fujimori Y."/>
            <person name="Komiyama M."/>
            <person name="Tashiro H."/>
            <person name="Tanigami A."/>
            <person name="Fujiwara T."/>
            <person name="Ono T."/>
            <person name="Yamada K."/>
            <person name="Fujii Y."/>
            <person name="Ozaki K."/>
            <person name="Hirao M."/>
            <person name="Ohmori Y."/>
            <person name="Kawabata A."/>
            <person name="Hikiji T."/>
            <person name="Kobatake N."/>
            <person name="Inagaki H."/>
            <person name="Ikema Y."/>
            <person name="Okamoto S."/>
            <person name="Okitani R."/>
            <person name="Kawakami T."/>
            <person name="Noguchi S."/>
            <person name="Itoh T."/>
            <person name="Shigeta K."/>
            <person name="Senba T."/>
            <person name="Matsumura K."/>
            <person name="Nakajima Y."/>
            <person name="Mizuno T."/>
            <person name="Morinaga M."/>
            <person name="Sasaki M."/>
            <person name="Togashi T."/>
            <person name="Oyama M."/>
            <person name="Hata H."/>
            <person name="Watanabe M."/>
            <person name="Komatsu T."/>
            <person name="Mizushima-Sugano J."/>
            <person name="Satoh T."/>
            <person name="Shirai Y."/>
            <person name="Takahashi Y."/>
            <person name="Nakagawa K."/>
            <person name="Okumura K."/>
            <person name="Nagase T."/>
            <person name="Nomura N."/>
            <person name="Kikuchi H."/>
            <person name="Masuho Y."/>
            <person name="Yamashita R."/>
            <person name="Nakai K."/>
            <person name="Yada T."/>
            <person name="Nakamura Y."/>
            <person name="Ohara O."/>
            <person name="Isogai T."/>
            <person name="Sugano S."/>
        </authorList>
    </citation>
    <scope>NUCLEOTIDE SEQUENCE [LARGE SCALE MRNA] (ISOFORMS 1 AND 2)</scope>
    <source>
        <tissue>Thymus</tissue>
    </source>
</reference>
<reference key="2">
    <citation type="journal article" date="2006" name="Nature">
        <title>The DNA sequence and biological annotation of human chromosome 1.</title>
        <authorList>
            <person name="Gregory S.G."/>
            <person name="Barlow K.F."/>
            <person name="McLay K.E."/>
            <person name="Kaul R."/>
            <person name="Swarbreck D."/>
            <person name="Dunham A."/>
            <person name="Scott C.E."/>
            <person name="Howe K.L."/>
            <person name="Woodfine K."/>
            <person name="Spencer C.C.A."/>
            <person name="Jones M.C."/>
            <person name="Gillson C."/>
            <person name="Searle S."/>
            <person name="Zhou Y."/>
            <person name="Kokocinski F."/>
            <person name="McDonald L."/>
            <person name="Evans R."/>
            <person name="Phillips K."/>
            <person name="Atkinson A."/>
            <person name="Cooper R."/>
            <person name="Jones C."/>
            <person name="Hall R.E."/>
            <person name="Andrews T.D."/>
            <person name="Lloyd C."/>
            <person name="Ainscough R."/>
            <person name="Almeida J.P."/>
            <person name="Ambrose K.D."/>
            <person name="Anderson F."/>
            <person name="Andrew R.W."/>
            <person name="Ashwell R.I.S."/>
            <person name="Aubin K."/>
            <person name="Babbage A.K."/>
            <person name="Bagguley C.L."/>
            <person name="Bailey J."/>
            <person name="Beasley H."/>
            <person name="Bethel G."/>
            <person name="Bird C.P."/>
            <person name="Bray-Allen S."/>
            <person name="Brown J.Y."/>
            <person name="Brown A.J."/>
            <person name="Buckley D."/>
            <person name="Burton J."/>
            <person name="Bye J."/>
            <person name="Carder C."/>
            <person name="Chapman J.C."/>
            <person name="Clark S.Y."/>
            <person name="Clarke G."/>
            <person name="Clee C."/>
            <person name="Cobley V."/>
            <person name="Collier R.E."/>
            <person name="Corby N."/>
            <person name="Coville G.J."/>
            <person name="Davies J."/>
            <person name="Deadman R."/>
            <person name="Dunn M."/>
            <person name="Earthrowl M."/>
            <person name="Ellington A.G."/>
            <person name="Errington H."/>
            <person name="Frankish A."/>
            <person name="Frankland J."/>
            <person name="French L."/>
            <person name="Garner P."/>
            <person name="Garnett J."/>
            <person name="Gay L."/>
            <person name="Ghori M.R.J."/>
            <person name="Gibson R."/>
            <person name="Gilby L.M."/>
            <person name="Gillett W."/>
            <person name="Glithero R.J."/>
            <person name="Grafham D.V."/>
            <person name="Griffiths C."/>
            <person name="Griffiths-Jones S."/>
            <person name="Grocock R."/>
            <person name="Hammond S."/>
            <person name="Harrison E.S.I."/>
            <person name="Hart E."/>
            <person name="Haugen E."/>
            <person name="Heath P.D."/>
            <person name="Holmes S."/>
            <person name="Holt K."/>
            <person name="Howden P.J."/>
            <person name="Hunt A.R."/>
            <person name="Hunt S.E."/>
            <person name="Hunter G."/>
            <person name="Isherwood J."/>
            <person name="James R."/>
            <person name="Johnson C."/>
            <person name="Johnson D."/>
            <person name="Joy A."/>
            <person name="Kay M."/>
            <person name="Kershaw J.K."/>
            <person name="Kibukawa M."/>
            <person name="Kimberley A.M."/>
            <person name="King A."/>
            <person name="Knights A.J."/>
            <person name="Lad H."/>
            <person name="Laird G."/>
            <person name="Lawlor S."/>
            <person name="Leongamornlert D.A."/>
            <person name="Lloyd D.M."/>
            <person name="Loveland J."/>
            <person name="Lovell J."/>
            <person name="Lush M.J."/>
            <person name="Lyne R."/>
            <person name="Martin S."/>
            <person name="Mashreghi-Mohammadi M."/>
            <person name="Matthews L."/>
            <person name="Matthews N.S.W."/>
            <person name="McLaren S."/>
            <person name="Milne S."/>
            <person name="Mistry S."/>
            <person name="Moore M.J.F."/>
            <person name="Nickerson T."/>
            <person name="O'Dell C.N."/>
            <person name="Oliver K."/>
            <person name="Palmeiri A."/>
            <person name="Palmer S.A."/>
            <person name="Parker A."/>
            <person name="Patel D."/>
            <person name="Pearce A.V."/>
            <person name="Peck A.I."/>
            <person name="Pelan S."/>
            <person name="Phelps K."/>
            <person name="Phillimore B.J."/>
            <person name="Plumb R."/>
            <person name="Rajan J."/>
            <person name="Raymond C."/>
            <person name="Rouse G."/>
            <person name="Saenphimmachak C."/>
            <person name="Sehra H.K."/>
            <person name="Sheridan E."/>
            <person name="Shownkeen R."/>
            <person name="Sims S."/>
            <person name="Skuce C.D."/>
            <person name="Smith M."/>
            <person name="Steward C."/>
            <person name="Subramanian S."/>
            <person name="Sycamore N."/>
            <person name="Tracey A."/>
            <person name="Tromans A."/>
            <person name="Van Helmond Z."/>
            <person name="Wall M."/>
            <person name="Wallis J.M."/>
            <person name="White S."/>
            <person name="Whitehead S.L."/>
            <person name="Wilkinson J.E."/>
            <person name="Willey D.L."/>
            <person name="Williams H."/>
            <person name="Wilming L."/>
            <person name="Wray P.W."/>
            <person name="Wu Z."/>
            <person name="Coulson A."/>
            <person name="Vaudin M."/>
            <person name="Sulston J.E."/>
            <person name="Durbin R.M."/>
            <person name="Hubbard T."/>
            <person name="Wooster R."/>
            <person name="Dunham I."/>
            <person name="Carter N.P."/>
            <person name="McVean G."/>
            <person name="Ross M.T."/>
            <person name="Harrow J."/>
            <person name="Olson M.V."/>
            <person name="Beck S."/>
            <person name="Rogers J."/>
            <person name="Bentley D.R."/>
        </authorList>
    </citation>
    <scope>NUCLEOTIDE SEQUENCE [LARGE SCALE GENOMIC DNA]</scope>
</reference>
<reference key="3">
    <citation type="journal article" date="2004" name="Genome Res.">
        <title>The status, quality, and expansion of the NIH full-length cDNA project: the Mammalian Gene Collection (MGC).</title>
        <authorList>
            <consortium name="The MGC Project Team"/>
        </authorList>
    </citation>
    <scope>NUCLEOTIDE SEQUENCE [LARGE SCALE MRNA] (ISOFORM 1)</scope>
</reference>
<reference key="4">
    <citation type="journal article" date="2008" name="Nat. Immunol.">
        <title>Akirins are highly conserved nuclear proteins required for NF-kappaB-dependent gene expression in Drosophila and mice.</title>
        <authorList>
            <person name="Goto A."/>
            <person name="Matsushita K."/>
            <person name="Gesellchen V."/>
            <person name="El Chamy L."/>
            <person name="Kuttenkeuler D."/>
            <person name="Takeuchi O."/>
            <person name="Hoffmann J.A."/>
            <person name="Akira S."/>
            <person name="Boutros M."/>
            <person name="Reichhart J.-M."/>
        </authorList>
    </citation>
    <scope>SUBCELLULAR LOCATION</scope>
    <scope>TISSUE SPECIFICITY</scope>
</reference>
<reference key="5">
    <citation type="journal article" date="2008" name="Nat. Immunol.">
        <authorList>
            <person name="Goto A."/>
            <person name="Matsushita K."/>
            <person name="Gesellchen V."/>
            <person name="El Chamy L."/>
            <person name="Kuttenkeuler D."/>
            <person name="Takeuchi O."/>
            <person name="Hoffmann J.A."/>
            <person name="Akira S."/>
            <person name="Boutros M."/>
            <person name="Reichhart J.-M."/>
        </authorList>
    </citation>
    <scope>ERRATUM OF PUBMED:18066067</scope>
</reference>
<reference key="6">
    <citation type="journal article" date="2008" name="Proc. Natl. Acad. Sci. U.S.A.">
        <title>A quantitative atlas of mitotic phosphorylation.</title>
        <authorList>
            <person name="Dephoure N."/>
            <person name="Zhou C."/>
            <person name="Villen J."/>
            <person name="Beausoleil S.A."/>
            <person name="Bakalarski C.E."/>
            <person name="Elledge S.J."/>
            <person name="Gygi S.P."/>
        </authorList>
    </citation>
    <scope>IDENTIFICATION BY MASS SPECTROMETRY [LARGE SCALE ANALYSIS]</scope>
    <source>
        <tissue>Cervix carcinoma</tissue>
    </source>
</reference>
<reference key="7">
    <citation type="journal article" date="2011" name="Sci. Signal.">
        <title>System-wide temporal characterization of the proteome and phosphoproteome of human embryonic stem cell differentiation.</title>
        <authorList>
            <person name="Rigbolt K.T."/>
            <person name="Prokhorova T.A."/>
            <person name="Akimov V."/>
            <person name="Henningsen J."/>
            <person name="Johansen P.T."/>
            <person name="Kratchmarova I."/>
            <person name="Kassem M."/>
            <person name="Mann M."/>
            <person name="Olsen J.V."/>
            <person name="Blagoev B."/>
        </authorList>
    </citation>
    <scope>PHOSPHORYLATION [LARGE SCALE ANALYSIS] AT SER-22</scope>
    <scope>IDENTIFICATION BY MASS SPECTROMETRY [LARGE SCALE ANALYSIS]</scope>
</reference>
<reference key="8">
    <citation type="journal article" date="2013" name="J. Proteome Res.">
        <title>Toward a comprehensive characterization of a human cancer cell phosphoproteome.</title>
        <authorList>
            <person name="Zhou H."/>
            <person name="Di Palma S."/>
            <person name="Preisinger C."/>
            <person name="Peng M."/>
            <person name="Polat A.N."/>
            <person name="Heck A.J."/>
            <person name="Mohammed S."/>
        </authorList>
    </citation>
    <scope>PHOSPHORYLATION [LARGE SCALE ANALYSIS] AT SER-22 AND THR-72</scope>
    <scope>IDENTIFICATION BY MASS SPECTROMETRY [LARGE SCALE ANALYSIS]</scope>
    <source>
        <tissue>Cervix carcinoma</tissue>
        <tissue>Erythroleukemia</tissue>
    </source>
</reference>
<reference key="9">
    <citation type="journal article" date="2021" name="Nature">
        <title>AKIRIN2 controls the nuclear import of proteasomes in vertebrates.</title>
        <authorList>
            <person name="de Almeida M."/>
            <person name="Hinterndorfer M."/>
            <person name="Brunner H."/>
            <person name="Grishkovskaya I."/>
            <person name="Singh K."/>
            <person name="Schleiffer A."/>
            <person name="Jude J."/>
            <person name="Deswal S."/>
            <person name="Kalis R."/>
            <person name="Vunjak M."/>
            <person name="Lendl T."/>
            <person name="Imre R."/>
            <person name="Roitinger E."/>
            <person name="Neumann T."/>
            <person name="Kandolf S."/>
            <person name="Schutzbier M."/>
            <person name="Mechtler K."/>
            <person name="Versteeg G.A."/>
            <person name="Haselbach D."/>
            <person name="Zuber J."/>
        </authorList>
    </citation>
    <scope>FUNCTION</scope>
</reference>
<name>AKIR1_HUMAN</name>
<proteinExistence type="evidence at protein level"/>
<feature type="chain" id="PRO_0000274318" description="Akirin-1">
    <location>
        <begin position="1"/>
        <end position="192"/>
    </location>
</feature>
<feature type="region of interest" description="Disordered" evidence="3">
    <location>
        <begin position="17"/>
        <end position="71"/>
    </location>
</feature>
<feature type="region of interest" description="Disordered" evidence="3">
    <location>
        <begin position="104"/>
        <end position="127"/>
    </location>
</feature>
<feature type="short sequence motif" description="Nuclear localization signal">
    <location>
        <begin position="23"/>
        <end position="28"/>
    </location>
</feature>
<feature type="short sequence motif" description="SYVS motif" evidence="1">
    <location>
        <begin position="189"/>
        <end position="192"/>
    </location>
</feature>
<feature type="compositionally biased region" description="Pro residues" evidence="3">
    <location>
        <begin position="31"/>
        <end position="49"/>
    </location>
</feature>
<feature type="compositionally biased region" description="Low complexity" evidence="3">
    <location>
        <begin position="50"/>
        <end position="60"/>
    </location>
</feature>
<feature type="compositionally biased region" description="Polar residues" evidence="3">
    <location>
        <begin position="104"/>
        <end position="122"/>
    </location>
</feature>
<feature type="modified residue" description="Phosphoserine" evidence="11 12">
    <location>
        <position position="22"/>
    </location>
</feature>
<feature type="modified residue" description="Phosphothreonine" evidence="12">
    <location>
        <position position="72"/>
    </location>
</feature>
<feature type="splice variant" id="VSP_042769" description="In isoform 2." evidence="6">
    <location>
        <begin position="121"/>
        <end position="165"/>
    </location>
</feature>
<feature type="sequence conflict" description="In Ref. 1; BAD96996." evidence="8" ref="1">
    <original>R</original>
    <variation>G</variation>
    <location>
        <position position="39"/>
    </location>
</feature>
<organism>
    <name type="scientific">Homo sapiens</name>
    <name type="common">Human</name>
    <dbReference type="NCBI Taxonomy" id="9606"/>
    <lineage>
        <taxon>Eukaryota</taxon>
        <taxon>Metazoa</taxon>
        <taxon>Chordata</taxon>
        <taxon>Craniata</taxon>
        <taxon>Vertebrata</taxon>
        <taxon>Euteleostomi</taxon>
        <taxon>Mammalia</taxon>
        <taxon>Eutheria</taxon>
        <taxon>Euarchontoglires</taxon>
        <taxon>Primates</taxon>
        <taxon>Haplorrhini</taxon>
        <taxon>Catarrhini</taxon>
        <taxon>Hominidae</taxon>
        <taxon>Homo</taxon>
    </lineage>
</organism>
<gene>
    <name evidence="7 10" type="primary">AKIRIN1</name>
    <name evidence="10" type="synonym">C1orf108</name>
</gene>
<keyword id="KW-0025">Alternative splicing</keyword>
<keyword id="KW-0539">Nucleus</keyword>
<keyword id="KW-0597">Phosphoprotein</keyword>
<keyword id="KW-1267">Proteomics identification</keyword>
<keyword id="KW-1185">Reference proteome</keyword>
<protein>
    <recommendedName>
        <fullName evidence="8">Akirin-1</fullName>
    </recommendedName>
</protein>
<accession>Q9H9L7</accession>
<accession>B4DZU6</accession>
<accession>Q0VDB3</accession>
<accession>Q53FK8</accession>
<dbReference type="EMBL" id="AK022728">
    <property type="protein sequence ID" value="BAB14208.1"/>
    <property type="molecule type" value="mRNA"/>
</dbReference>
<dbReference type="EMBL" id="AK223276">
    <property type="protein sequence ID" value="BAD96996.1"/>
    <property type="molecule type" value="mRNA"/>
</dbReference>
<dbReference type="EMBL" id="AK303098">
    <property type="protein sequence ID" value="BAG64208.1"/>
    <property type="molecule type" value="mRNA"/>
</dbReference>
<dbReference type="EMBL" id="AL606465">
    <property type="status" value="NOT_ANNOTATED_CDS"/>
    <property type="molecule type" value="Genomic_DNA"/>
</dbReference>
<dbReference type="EMBL" id="BC119745">
    <property type="protein sequence ID" value="AAI19746.1"/>
    <property type="molecule type" value="mRNA"/>
</dbReference>
<dbReference type="EMBL" id="BC119746">
    <property type="protein sequence ID" value="AAI19747.1"/>
    <property type="status" value="ALT_INIT"/>
    <property type="molecule type" value="mRNA"/>
</dbReference>
<dbReference type="CCDS" id="CCDS433.1">
    <molecule id="Q9H9L7-1"/>
</dbReference>
<dbReference type="CCDS" id="CCDS44113.1">
    <molecule id="Q9H9L7-2"/>
</dbReference>
<dbReference type="RefSeq" id="NP_001129747.1">
    <molecule id="Q9H9L7-2"/>
    <property type="nucleotide sequence ID" value="NM_001136275.2"/>
</dbReference>
<dbReference type="RefSeq" id="NP_078871.1">
    <molecule id="Q9H9L7-1"/>
    <property type="nucleotide sequence ID" value="NM_024595.3"/>
</dbReference>
<dbReference type="SMR" id="Q9H9L7"/>
<dbReference type="BioGRID" id="122775">
    <property type="interactions" value="25"/>
</dbReference>
<dbReference type="FunCoup" id="Q9H9L7">
    <property type="interactions" value="4432"/>
</dbReference>
<dbReference type="IntAct" id="Q9H9L7">
    <property type="interactions" value="11"/>
</dbReference>
<dbReference type="STRING" id="9606.ENSP00000392678"/>
<dbReference type="GlyGen" id="Q9H9L7">
    <property type="glycosylation" value="1 site"/>
</dbReference>
<dbReference type="iPTMnet" id="Q9H9L7"/>
<dbReference type="PhosphoSitePlus" id="Q9H9L7"/>
<dbReference type="BioMuta" id="AKIRIN1"/>
<dbReference type="DMDM" id="74752744"/>
<dbReference type="jPOST" id="Q9H9L7"/>
<dbReference type="MassIVE" id="Q9H9L7"/>
<dbReference type="PaxDb" id="9606-ENSP00000392678"/>
<dbReference type="PeptideAtlas" id="Q9H9L7"/>
<dbReference type="ProteomicsDB" id="81331">
    <molecule id="Q9H9L7-1"/>
</dbReference>
<dbReference type="ProteomicsDB" id="81332">
    <molecule id="Q9H9L7-2"/>
</dbReference>
<dbReference type="Antibodypedia" id="31846">
    <property type="antibodies" value="125 antibodies from 21 providers"/>
</dbReference>
<dbReference type="DNASU" id="79647"/>
<dbReference type="Ensembl" id="ENST00000432648.8">
    <molecule id="Q9H9L7-1"/>
    <property type="protein sequence ID" value="ENSP00000392678.3"/>
    <property type="gene ID" value="ENSG00000174574.16"/>
</dbReference>
<dbReference type="Ensembl" id="ENST00000446189.6">
    <molecule id="Q9H9L7-2"/>
    <property type="protein sequence ID" value="ENSP00000389866.2"/>
    <property type="gene ID" value="ENSG00000174574.16"/>
</dbReference>
<dbReference type="GeneID" id="79647"/>
<dbReference type="KEGG" id="hsa:79647"/>
<dbReference type="MANE-Select" id="ENST00000432648.8">
    <property type="protein sequence ID" value="ENSP00000392678.3"/>
    <property type="RefSeq nucleotide sequence ID" value="NM_024595.3"/>
    <property type="RefSeq protein sequence ID" value="NP_078871.1"/>
</dbReference>
<dbReference type="UCSC" id="uc001ccw.4">
    <molecule id="Q9H9L7-1"/>
    <property type="organism name" value="human"/>
</dbReference>
<dbReference type="AGR" id="HGNC:25744"/>
<dbReference type="CTD" id="79647"/>
<dbReference type="DisGeNET" id="79647"/>
<dbReference type="GeneCards" id="AKIRIN1"/>
<dbReference type="HGNC" id="HGNC:25744">
    <property type="gene designation" value="AKIRIN1"/>
</dbReference>
<dbReference type="HPA" id="ENSG00000174574">
    <property type="expression patterns" value="Low tissue specificity"/>
</dbReference>
<dbReference type="MIM" id="615164">
    <property type="type" value="gene"/>
</dbReference>
<dbReference type="neXtProt" id="NX_Q9H9L7"/>
<dbReference type="OpenTargets" id="ENSG00000174574"/>
<dbReference type="PharmGKB" id="PA162376180"/>
<dbReference type="VEuPathDB" id="HostDB:ENSG00000174574"/>
<dbReference type="eggNOG" id="KOG4330">
    <property type="taxonomic scope" value="Eukaryota"/>
</dbReference>
<dbReference type="GeneTree" id="ENSGT00940000158787"/>
<dbReference type="InParanoid" id="Q9H9L7"/>
<dbReference type="OMA" id="PMGGEHR"/>
<dbReference type="OrthoDB" id="10039914at2759"/>
<dbReference type="PAN-GO" id="Q9H9L7">
    <property type="GO annotations" value="9 GO annotations based on evolutionary models"/>
</dbReference>
<dbReference type="PhylomeDB" id="Q9H9L7"/>
<dbReference type="TreeFam" id="TF317123"/>
<dbReference type="PathwayCommons" id="Q9H9L7"/>
<dbReference type="SignaLink" id="Q9H9L7"/>
<dbReference type="BioGRID-ORCS" id="79647">
    <property type="hits" value="74 hits in 1156 CRISPR screens"/>
</dbReference>
<dbReference type="ChiTaRS" id="AKIRIN1">
    <property type="organism name" value="human"/>
</dbReference>
<dbReference type="GenomeRNAi" id="79647"/>
<dbReference type="Pharos" id="Q9H9L7">
    <property type="development level" value="Tbio"/>
</dbReference>
<dbReference type="PRO" id="PR:Q9H9L7"/>
<dbReference type="Proteomes" id="UP000005640">
    <property type="component" value="Chromosome 1"/>
</dbReference>
<dbReference type="RNAct" id="Q9H9L7">
    <property type="molecule type" value="protein"/>
</dbReference>
<dbReference type="Bgee" id="ENSG00000174574">
    <property type="expression patterns" value="Expressed in sperm and 197 other cell types or tissues"/>
</dbReference>
<dbReference type="ExpressionAtlas" id="Q9H9L7">
    <property type="expression patterns" value="baseline and differential"/>
</dbReference>
<dbReference type="GO" id="GO:0000785">
    <property type="term" value="C:chromatin"/>
    <property type="evidence" value="ECO:0000318"/>
    <property type="project" value="GO_Central"/>
</dbReference>
<dbReference type="GO" id="GO:0031965">
    <property type="term" value="C:nuclear membrane"/>
    <property type="evidence" value="ECO:0000314"/>
    <property type="project" value="HPA"/>
</dbReference>
<dbReference type="GO" id="GO:0005654">
    <property type="term" value="C:nucleoplasm"/>
    <property type="evidence" value="ECO:0000314"/>
    <property type="project" value="HPA"/>
</dbReference>
<dbReference type="GO" id="GO:0005634">
    <property type="term" value="C:nucleus"/>
    <property type="evidence" value="ECO:0000314"/>
    <property type="project" value="UniProtKB"/>
</dbReference>
<dbReference type="GO" id="GO:0003712">
    <property type="term" value="F:transcription coregulator activity"/>
    <property type="evidence" value="ECO:0000318"/>
    <property type="project" value="GO_Central"/>
</dbReference>
<dbReference type="GO" id="GO:0014839">
    <property type="term" value="P:myoblast migration involved in skeletal muscle regeneration"/>
    <property type="evidence" value="ECO:0000250"/>
    <property type="project" value="UniProtKB"/>
</dbReference>
<dbReference type="GO" id="GO:1902725">
    <property type="term" value="P:negative regulation of satellite cell differentiation"/>
    <property type="evidence" value="ECO:0000250"/>
    <property type="project" value="UniProtKB"/>
</dbReference>
<dbReference type="GO" id="GO:1902723">
    <property type="term" value="P:negative regulation of skeletal muscle satellite cell proliferation"/>
    <property type="evidence" value="ECO:0000250"/>
    <property type="project" value="UniProtKB"/>
</dbReference>
<dbReference type="GO" id="GO:0010592">
    <property type="term" value="P:positive regulation of lamellipodium assembly"/>
    <property type="evidence" value="ECO:0000250"/>
    <property type="project" value="UniProtKB"/>
</dbReference>
<dbReference type="GO" id="GO:0010759">
    <property type="term" value="P:positive regulation of macrophage chemotaxis"/>
    <property type="evidence" value="ECO:0000250"/>
    <property type="project" value="UniProtKB"/>
</dbReference>
<dbReference type="GO" id="GO:0045663">
    <property type="term" value="P:positive regulation of myoblast differentiation"/>
    <property type="evidence" value="ECO:0000250"/>
    <property type="project" value="UniProtKB"/>
</dbReference>
<dbReference type="GO" id="GO:0045944">
    <property type="term" value="P:positive regulation of transcription by RNA polymerase II"/>
    <property type="evidence" value="ECO:0000250"/>
    <property type="project" value="UniProtKB"/>
</dbReference>
<dbReference type="CDD" id="cd22243">
    <property type="entry name" value="akirin-1"/>
    <property type="match status" value="1"/>
</dbReference>
<dbReference type="InterPro" id="IPR024132">
    <property type="entry name" value="Akirin"/>
</dbReference>
<dbReference type="PANTHER" id="PTHR13293:SF9">
    <property type="entry name" value="AKIRIN-1"/>
    <property type="match status" value="1"/>
</dbReference>
<dbReference type="PANTHER" id="PTHR13293">
    <property type="entry name" value="AKIRIN-RELATED"/>
    <property type="match status" value="1"/>
</dbReference>
<evidence type="ECO:0000250" key="1">
    <source>
        <dbReference type="UniProtKB" id="Q53H80"/>
    </source>
</evidence>
<evidence type="ECO:0000250" key="2">
    <source>
        <dbReference type="UniProtKB" id="Q99LF1"/>
    </source>
</evidence>
<evidence type="ECO:0000256" key="3">
    <source>
        <dbReference type="SAM" id="MobiDB-lite"/>
    </source>
</evidence>
<evidence type="ECO:0000269" key="4">
    <source>
    </source>
</evidence>
<evidence type="ECO:0000269" key="5">
    <source>
    </source>
</evidence>
<evidence type="ECO:0000303" key="6">
    <source>
    </source>
</evidence>
<evidence type="ECO:0000303" key="7">
    <source>
    </source>
</evidence>
<evidence type="ECO:0000305" key="8"/>
<evidence type="ECO:0000305" key="9">
    <source>
    </source>
</evidence>
<evidence type="ECO:0000312" key="10">
    <source>
        <dbReference type="HGNC" id="HGNC:25744"/>
    </source>
</evidence>
<evidence type="ECO:0007744" key="11">
    <source>
    </source>
</evidence>
<evidence type="ECO:0007744" key="12">
    <source>
    </source>
</evidence>